<evidence type="ECO:0000255" key="1">
    <source>
        <dbReference type="HAMAP-Rule" id="MF_01043"/>
    </source>
</evidence>
<proteinExistence type="inferred from homology"/>
<feature type="chain" id="PRO_1000149588" description="Glycerol-3-phosphate acyltransferase">
    <location>
        <begin position="1"/>
        <end position="213"/>
    </location>
</feature>
<feature type="transmembrane region" description="Helical" evidence="1">
    <location>
        <begin position="2"/>
        <end position="22"/>
    </location>
</feature>
<feature type="transmembrane region" description="Helical" evidence="1">
    <location>
        <begin position="54"/>
        <end position="74"/>
    </location>
</feature>
<feature type="transmembrane region" description="Helical" evidence="1">
    <location>
        <begin position="80"/>
        <end position="100"/>
    </location>
</feature>
<feature type="transmembrane region" description="Helical" evidence="1">
    <location>
        <begin position="110"/>
        <end position="130"/>
    </location>
</feature>
<feature type="transmembrane region" description="Helical" evidence="1">
    <location>
        <begin position="143"/>
        <end position="163"/>
    </location>
</feature>
<feature type="transmembrane region" description="Helical" evidence="1">
    <location>
        <begin position="165"/>
        <end position="185"/>
    </location>
</feature>
<gene>
    <name evidence="1" type="primary">plsY</name>
    <name type="ordered locus">SPT_1352</name>
</gene>
<sequence>MITIVLLILAYLLGSIPSGLWIGQVFFQINLREHGSGNTGTTNTFRILGKKAGMATFVIDFFKGTLATLLPIMFHLQGVSPLIFGLLAVIGHTFPIFAGFKGGKAVATSAGVVFGFAPVFCLYLAVVFFGTLYLGSMISLSSVTASIAAVIGVLLFPLFGFILNNYDPLFIAIILALASLIIIRHKDNIARIKNKTENLVPWGLNLTHQDPKK</sequence>
<organism>
    <name type="scientific">Streptococcus pneumoniae (strain Taiwan19F-14)</name>
    <dbReference type="NCBI Taxonomy" id="487213"/>
    <lineage>
        <taxon>Bacteria</taxon>
        <taxon>Bacillati</taxon>
        <taxon>Bacillota</taxon>
        <taxon>Bacilli</taxon>
        <taxon>Lactobacillales</taxon>
        <taxon>Streptococcaceae</taxon>
        <taxon>Streptococcus</taxon>
    </lineage>
</organism>
<dbReference type="EC" id="2.3.1.275" evidence="1"/>
<dbReference type="EMBL" id="CP000921">
    <property type="protein sequence ID" value="ACO23687.1"/>
    <property type="molecule type" value="Genomic_DNA"/>
</dbReference>
<dbReference type="RefSeq" id="WP_000628801.1">
    <property type="nucleotide sequence ID" value="NC_012469.1"/>
</dbReference>
<dbReference type="SMR" id="C1CS41"/>
<dbReference type="KEGG" id="snt:SPT_1352"/>
<dbReference type="HOGENOM" id="CLU_081254_4_0_9"/>
<dbReference type="UniPathway" id="UPA00085"/>
<dbReference type="GO" id="GO:0005886">
    <property type="term" value="C:plasma membrane"/>
    <property type="evidence" value="ECO:0007669"/>
    <property type="project" value="UniProtKB-SubCell"/>
</dbReference>
<dbReference type="GO" id="GO:0043772">
    <property type="term" value="F:acyl-phosphate glycerol-3-phosphate acyltransferase activity"/>
    <property type="evidence" value="ECO:0007669"/>
    <property type="project" value="UniProtKB-UniRule"/>
</dbReference>
<dbReference type="GO" id="GO:0008654">
    <property type="term" value="P:phospholipid biosynthetic process"/>
    <property type="evidence" value="ECO:0007669"/>
    <property type="project" value="UniProtKB-UniRule"/>
</dbReference>
<dbReference type="HAMAP" id="MF_01043">
    <property type="entry name" value="PlsY"/>
    <property type="match status" value="1"/>
</dbReference>
<dbReference type="InterPro" id="IPR003811">
    <property type="entry name" value="G3P_acylTferase_PlsY"/>
</dbReference>
<dbReference type="NCBIfam" id="TIGR00023">
    <property type="entry name" value="glycerol-3-phosphate 1-O-acyltransferase PlsY"/>
    <property type="match status" value="1"/>
</dbReference>
<dbReference type="PANTHER" id="PTHR30309:SF0">
    <property type="entry name" value="GLYCEROL-3-PHOSPHATE ACYLTRANSFERASE-RELATED"/>
    <property type="match status" value="1"/>
</dbReference>
<dbReference type="PANTHER" id="PTHR30309">
    <property type="entry name" value="INNER MEMBRANE PROTEIN YGIH"/>
    <property type="match status" value="1"/>
</dbReference>
<dbReference type="Pfam" id="PF02660">
    <property type="entry name" value="G3P_acyltransf"/>
    <property type="match status" value="1"/>
</dbReference>
<dbReference type="SMART" id="SM01207">
    <property type="entry name" value="G3P_acyltransf"/>
    <property type="match status" value="1"/>
</dbReference>
<keyword id="KW-1003">Cell membrane</keyword>
<keyword id="KW-0444">Lipid biosynthesis</keyword>
<keyword id="KW-0443">Lipid metabolism</keyword>
<keyword id="KW-0472">Membrane</keyword>
<keyword id="KW-0594">Phospholipid biosynthesis</keyword>
<keyword id="KW-1208">Phospholipid metabolism</keyword>
<keyword id="KW-0808">Transferase</keyword>
<keyword id="KW-0812">Transmembrane</keyword>
<keyword id="KW-1133">Transmembrane helix</keyword>
<name>PLSY_STRZT</name>
<protein>
    <recommendedName>
        <fullName evidence="1">Glycerol-3-phosphate acyltransferase</fullName>
    </recommendedName>
    <alternativeName>
        <fullName evidence="1">Acyl-PO4 G3P acyltransferase</fullName>
    </alternativeName>
    <alternativeName>
        <fullName evidence="1">Acyl-phosphate--glycerol-3-phosphate acyltransferase</fullName>
    </alternativeName>
    <alternativeName>
        <fullName evidence="1">G3P acyltransferase</fullName>
        <shortName evidence="1">GPAT</shortName>
        <ecNumber evidence="1">2.3.1.275</ecNumber>
    </alternativeName>
    <alternativeName>
        <fullName evidence="1">Lysophosphatidic acid synthase</fullName>
        <shortName evidence="1">LPA synthase</shortName>
    </alternativeName>
</protein>
<comment type="function">
    <text evidence="1">Catalyzes the transfer of an acyl group from acyl-phosphate (acyl-PO(4)) to glycerol-3-phosphate (G3P) to form lysophosphatidic acid (LPA). This enzyme utilizes acyl-phosphate as fatty acyl donor, but not acyl-CoA or acyl-ACP.</text>
</comment>
<comment type="catalytic activity">
    <reaction evidence="1">
        <text>an acyl phosphate + sn-glycerol 3-phosphate = a 1-acyl-sn-glycero-3-phosphate + phosphate</text>
        <dbReference type="Rhea" id="RHEA:34075"/>
        <dbReference type="ChEBI" id="CHEBI:43474"/>
        <dbReference type="ChEBI" id="CHEBI:57597"/>
        <dbReference type="ChEBI" id="CHEBI:57970"/>
        <dbReference type="ChEBI" id="CHEBI:59918"/>
        <dbReference type="EC" id="2.3.1.275"/>
    </reaction>
</comment>
<comment type="pathway">
    <text evidence="1">Lipid metabolism; phospholipid metabolism.</text>
</comment>
<comment type="subunit">
    <text evidence="1">Probably interacts with PlsX.</text>
</comment>
<comment type="subcellular location">
    <subcellularLocation>
        <location evidence="1">Cell membrane</location>
        <topology evidence="1">Multi-pass membrane protein</topology>
    </subcellularLocation>
</comment>
<comment type="similarity">
    <text evidence="1">Belongs to the PlsY family.</text>
</comment>
<accession>C1CS41</accession>
<reference key="1">
    <citation type="journal article" date="2010" name="Genome Biol.">
        <title>Structure and dynamics of the pan-genome of Streptococcus pneumoniae and closely related species.</title>
        <authorList>
            <person name="Donati C."/>
            <person name="Hiller N.L."/>
            <person name="Tettelin H."/>
            <person name="Muzzi A."/>
            <person name="Croucher N.J."/>
            <person name="Angiuoli S.V."/>
            <person name="Oggioni M."/>
            <person name="Dunning Hotopp J.C."/>
            <person name="Hu F.Z."/>
            <person name="Riley D.R."/>
            <person name="Covacci A."/>
            <person name="Mitchell T.J."/>
            <person name="Bentley S.D."/>
            <person name="Kilian M."/>
            <person name="Ehrlich G.D."/>
            <person name="Rappuoli R."/>
            <person name="Moxon E.R."/>
            <person name="Masignani V."/>
        </authorList>
    </citation>
    <scope>NUCLEOTIDE SEQUENCE [LARGE SCALE GENOMIC DNA]</scope>
    <source>
        <strain>Taiwan19F-14</strain>
    </source>
</reference>